<feature type="chain" id="PRO_1000166513" description="ATP synthase subunit alpha">
    <location>
        <begin position="1"/>
        <end position="507"/>
    </location>
</feature>
<feature type="binding site" evidence="1">
    <location>
        <begin position="170"/>
        <end position="177"/>
    </location>
    <ligand>
        <name>ATP</name>
        <dbReference type="ChEBI" id="CHEBI:30616"/>
    </ligand>
</feature>
<feature type="site" description="Required for activity" evidence="1">
    <location>
        <position position="371"/>
    </location>
</feature>
<dbReference type="EC" id="7.1.2.2" evidence="1"/>
<dbReference type="EMBL" id="CP001079">
    <property type="protein sequence ID" value="ACM49713.1"/>
    <property type="molecule type" value="Genomic_DNA"/>
</dbReference>
<dbReference type="RefSeq" id="WP_010266218.1">
    <property type="nucleotide sequence ID" value="NZ_AFMS01000080.1"/>
</dbReference>
<dbReference type="SMR" id="B9KH09"/>
<dbReference type="STRING" id="320483.AMF_887"/>
<dbReference type="GeneID" id="7398735"/>
<dbReference type="KEGG" id="amf:AMF_887"/>
<dbReference type="eggNOG" id="COG0056">
    <property type="taxonomic scope" value="Bacteria"/>
</dbReference>
<dbReference type="HOGENOM" id="CLU_010091_2_1_5"/>
<dbReference type="Proteomes" id="UP000007307">
    <property type="component" value="Chromosome"/>
</dbReference>
<dbReference type="GO" id="GO:0005886">
    <property type="term" value="C:plasma membrane"/>
    <property type="evidence" value="ECO:0007669"/>
    <property type="project" value="UniProtKB-SubCell"/>
</dbReference>
<dbReference type="GO" id="GO:0045259">
    <property type="term" value="C:proton-transporting ATP synthase complex"/>
    <property type="evidence" value="ECO:0007669"/>
    <property type="project" value="UniProtKB-KW"/>
</dbReference>
<dbReference type="GO" id="GO:0043531">
    <property type="term" value="F:ADP binding"/>
    <property type="evidence" value="ECO:0007669"/>
    <property type="project" value="TreeGrafter"/>
</dbReference>
<dbReference type="GO" id="GO:0005524">
    <property type="term" value="F:ATP binding"/>
    <property type="evidence" value="ECO:0007669"/>
    <property type="project" value="UniProtKB-UniRule"/>
</dbReference>
<dbReference type="GO" id="GO:0046933">
    <property type="term" value="F:proton-transporting ATP synthase activity, rotational mechanism"/>
    <property type="evidence" value="ECO:0007669"/>
    <property type="project" value="UniProtKB-UniRule"/>
</dbReference>
<dbReference type="CDD" id="cd18113">
    <property type="entry name" value="ATP-synt_F1_alpha_C"/>
    <property type="match status" value="1"/>
</dbReference>
<dbReference type="CDD" id="cd18116">
    <property type="entry name" value="ATP-synt_F1_alpha_N"/>
    <property type="match status" value="1"/>
</dbReference>
<dbReference type="CDD" id="cd01132">
    <property type="entry name" value="F1-ATPase_alpha_CD"/>
    <property type="match status" value="1"/>
</dbReference>
<dbReference type="FunFam" id="1.20.150.20:FF:000001">
    <property type="entry name" value="ATP synthase subunit alpha"/>
    <property type="match status" value="1"/>
</dbReference>
<dbReference type="FunFam" id="3.40.50.300:FF:002432">
    <property type="entry name" value="ATP synthase subunit alpha, mitochondrial"/>
    <property type="match status" value="1"/>
</dbReference>
<dbReference type="Gene3D" id="2.40.30.20">
    <property type="match status" value="1"/>
</dbReference>
<dbReference type="Gene3D" id="1.20.150.20">
    <property type="entry name" value="ATP synthase alpha/beta chain, C-terminal domain"/>
    <property type="match status" value="1"/>
</dbReference>
<dbReference type="Gene3D" id="3.40.50.300">
    <property type="entry name" value="P-loop containing nucleotide triphosphate hydrolases"/>
    <property type="match status" value="1"/>
</dbReference>
<dbReference type="HAMAP" id="MF_01346">
    <property type="entry name" value="ATP_synth_alpha_bact"/>
    <property type="match status" value="1"/>
</dbReference>
<dbReference type="InterPro" id="IPR023366">
    <property type="entry name" value="ATP_synth_asu-like_sf"/>
</dbReference>
<dbReference type="InterPro" id="IPR000793">
    <property type="entry name" value="ATP_synth_asu_C"/>
</dbReference>
<dbReference type="InterPro" id="IPR038376">
    <property type="entry name" value="ATP_synth_asu_C_sf"/>
</dbReference>
<dbReference type="InterPro" id="IPR033732">
    <property type="entry name" value="ATP_synth_F1_a_nt-bd_dom"/>
</dbReference>
<dbReference type="InterPro" id="IPR005294">
    <property type="entry name" value="ATP_synth_F1_asu"/>
</dbReference>
<dbReference type="InterPro" id="IPR020003">
    <property type="entry name" value="ATPase_a/bsu_AS"/>
</dbReference>
<dbReference type="InterPro" id="IPR004100">
    <property type="entry name" value="ATPase_F1/V1/A1_a/bsu_N"/>
</dbReference>
<dbReference type="InterPro" id="IPR036121">
    <property type="entry name" value="ATPase_F1/V1/A1_a/bsu_N_sf"/>
</dbReference>
<dbReference type="InterPro" id="IPR000194">
    <property type="entry name" value="ATPase_F1/V1/A1_a/bsu_nucl-bd"/>
</dbReference>
<dbReference type="InterPro" id="IPR027417">
    <property type="entry name" value="P-loop_NTPase"/>
</dbReference>
<dbReference type="NCBIfam" id="TIGR00962">
    <property type="entry name" value="atpA"/>
    <property type="match status" value="1"/>
</dbReference>
<dbReference type="NCBIfam" id="NF009884">
    <property type="entry name" value="PRK13343.1"/>
    <property type="match status" value="1"/>
</dbReference>
<dbReference type="PANTHER" id="PTHR48082">
    <property type="entry name" value="ATP SYNTHASE SUBUNIT ALPHA, MITOCHONDRIAL"/>
    <property type="match status" value="1"/>
</dbReference>
<dbReference type="PANTHER" id="PTHR48082:SF2">
    <property type="entry name" value="ATP SYNTHASE SUBUNIT ALPHA, MITOCHONDRIAL"/>
    <property type="match status" value="1"/>
</dbReference>
<dbReference type="Pfam" id="PF00006">
    <property type="entry name" value="ATP-synt_ab"/>
    <property type="match status" value="1"/>
</dbReference>
<dbReference type="Pfam" id="PF00306">
    <property type="entry name" value="ATP-synt_ab_C"/>
    <property type="match status" value="1"/>
</dbReference>
<dbReference type="Pfam" id="PF02874">
    <property type="entry name" value="ATP-synt_ab_N"/>
    <property type="match status" value="1"/>
</dbReference>
<dbReference type="PIRSF" id="PIRSF039088">
    <property type="entry name" value="F_ATPase_subunit_alpha"/>
    <property type="match status" value="1"/>
</dbReference>
<dbReference type="SUPFAM" id="SSF47917">
    <property type="entry name" value="C-terminal domain of alpha and beta subunits of F1 ATP synthase"/>
    <property type="match status" value="1"/>
</dbReference>
<dbReference type="SUPFAM" id="SSF50615">
    <property type="entry name" value="N-terminal domain of alpha and beta subunits of F1 ATP synthase"/>
    <property type="match status" value="1"/>
</dbReference>
<dbReference type="SUPFAM" id="SSF52540">
    <property type="entry name" value="P-loop containing nucleoside triphosphate hydrolases"/>
    <property type="match status" value="1"/>
</dbReference>
<dbReference type="PROSITE" id="PS00152">
    <property type="entry name" value="ATPASE_ALPHA_BETA"/>
    <property type="match status" value="1"/>
</dbReference>
<sequence length="507" mass="54246">MSIVSSGDILKILKERIEGFDSPVKTSSVGDVVAIKDGIALVYGLSGVKFGETVAFSSGVRGVVAGLERDTCSVVVFGEDREIREGDSVQCTGELMTVPAGLSVLGRVVNPLGSPVDGGNAIVADSRLPVEAKAPGIMARQPVCEPLQTGIKTVDMLIPIGRGQRELVIGDRKTGKTAIALDTIINQKKTNDTADAKNRMYCIYVAIGQKNSSIARVVHKLKETGAMDYTIVVAAGASDPVSIQYLAPYAACAMGEFFRDNGMHCLIVYDDLSKHAVAYRQMSLLLRRPPGREAYPGDVFYIHSRLLERAAKLSDDLGGGSLTALPIIETQAGDVSAYIPTNVISITDGQIFLESELFHKGFRPAINVGLSVSRVGSAAQVKSVKKVAGSMKLTLAQYRELEDFARFGSDLDPSSQAMLEKGRRFMELLKQGQYSPLSVEEQVAVVLAGADDCVNGIPVSEISKFERGLLERLRAEHGGLMSSLSADIADDIKGKLLEVIRGFAASF</sequence>
<comment type="function">
    <text evidence="1">Produces ATP from ADP in the presence of a proton gradient across the membrane. The alpha chain is a regulatory subunit.</text>
</comment>
<comment type="catalytic activity">
    <reaction evidence="1">
        <text>ATP + H2O + 4 H(+)(in) = ADP + phosphate + 5 H(+)(out)</text>
        <dbReference type="Rhea" id="RHEA:57720"/>
        <dbReference type="ChEBI" id="CHEBI:15377"/>
        <dbReference type="ChEBI" id="CHEBI:15378"/>
        <dbReference type="ChEBI" id="CHEBI:30616"/>
        <dbReference type="ChEBI" id="CHEBI:43474"/>
        <dbReference type="ChEBI" id="CHEBI:456216"/>
        <dbReference type="EC" id="7.1.2.2"/>
    </reaction>
</comment>
<comment type="subunit">
    <text evidence="1">F-type ATPases have 2 components, CF(1) - the catalytic core - and CF(0) - the membrane proton channel. CF(1) has five subunits: alpha(3), beta(3), gamma(1), delta(1), epsilon(1). CF(0) has three main subunits: a(1), b(2) and c(9-12). The alpha and beta chains form an alternating ring which encloses part of the gamma chain. CF(1) is attached to CF(0) by a central stalk formed by the gamma and epsilon chains, while a peripheral stalk is formed by the delta and b chains.</text>
</comment>
<comment type="subcellular location">
    <subcellularLocation>
        <location evidence="1">Cell inner membrane</location>
        <topology evidence="1">Peripheral membrane protein</topology>
    </subcellularLocation>
</comment>
<comment type="similarity">
    <text evidence="1">Belongs to the ATPase alpha/beta chains family.</text>
</comment>
<organism>
    <name type="scientific">Anaplasma marginale (strain Florida)</name>
    <dbReference type="NCBI Taxonomy" id="320483"/>
    <lineage>
        <taxon>Bacteria</taxon>
        <taxon>Pseudomonadati</taxon>
        <taxon>Pseudomonadota</taxon>
        <taxon>Alphaproteobacteria</taxon>
        <taxon>Rickettsiales</taxon>
        <taxon>Anaplasmataceae</taxon>
        <taxon>Anaplasma</taxon>
    </lineage>
</organism>
<gene>
    <name evidence="1" type="primary">atpA</name>
    <name type="ordered locus">AMF_887</name>
</gene>
<name>ATPA_ANAMF</name>
<reference key="1">
    <citation type="journal article" date="2009" name="BMC Genomics">
        <title>Conservation in the face of diversity: multistrain analysis of an intracellular bacterium.</title>
        <authorList>
            <person name="Dark M.J."/>
            <person name="Herndon D.R."/>
            <person name="Kappmeyer L.S."/>
            <person name="Gonzales M.P."/>
            <person name="Nordeen E."/>
            <person name="Palmer G.H."/>
            <person name="Knowles D.P. Jr."/>
            <person name="Brayton K.A."/>
        </authorList>
    </citation>
    <scope>NUCLEOTIDE SEQUENCE [LARGE SCALE GENOMIC DNA]</scope>
    <source>
        <strain>Florida</strain>
    </source>
</reference>
<keyword id="KW-0066">ATP synthesis</keyword>
<keyword id="KW-0067">ATP-binding</keyword>
<keyword id="KW-0997">Cell inner membrane</keyword>
<keyword id="KW-1003">Cell membrane</keyword>
<keyword id="KW-0139">CF(1)</keyword>
<keyword id="KW-0375">Hydrogen ion transport</keyword>
<keyword id="KW-0406">Ion transport</keyword>
<keyword id="KW-0472">Membrane</keyword>
<keyword id="KW-0547">Nucleotide-binding</keyword>
<keyword id="KW-1185">Reference proteome</keyword>
<keyword id="KW-1278">Translocase</keyword>
<keyword id="KW-0813">Transport</keyword>
<evidence type="ECO:0000255" key="1">
    <source>
        <dbReference type="HAMAP-Rule" id="MF_01346"/>
    </source>
</evidence>
<protein>
    <recommendedName>
        <fullName evidence="1">ATP synthase subunit alpha</fullName>
        <ecNumber evidence="1">7.1.2.2</ecNumber>
    </recommendedName>
    <alternativeName>
        <fullName evidence="1">ATP synthase F1 sector subunit alpha</fullName>
    </alternativeName>
    <alternativeName>
        <fullName evidence="1">F-ATPase subunit alpha</fullName>
    </alternativeName>
</protein>
<accession>B9KH09</accession>
<proteinExistence type="inferred from homology"/>